<evidence type="ECO:0000250" key="1"/>
<evidence type="ECO:0000305" key="2"/>
<accession>P56954</accession>
<accession>Q0PBB7</accession>
<feature type="chain" id="PRO_0000128708" description="Probable malate:quinone oxidoreductase">
    <location>
        <begin position="1"/>
        <end position="448"/>
    </location>
</feature>
<keyword id="KW-0274">FAD</keyword>
<keyword id="KW-0285">Flavoprotein</keyword>
<keyword id="KW-0560">Oxidoreductase</keyword>
<keyword id="KW-1185">Reference proteome</keyword>
<keyword id="KW-0816">Tricarboxylic acid cycle</keyword>
<protein>
    <recommendedName>
        <fullName>Probable malate:quinone oxidoreductase</fullName>
        <ecNumber>1.1.5.4</ecNumber>
    </recommendedName>
    <alternativeName>
        <fullName>MQO</fullName>
    </alternativeName>
    <alternativeName>
        <fullName>Malate dehydrogenase [quinone]</fullName>
    </alternativeName>
</protein>
<proteinExistence type="inferred from homology"/>
<comment type="function">
    <text evidence="1">Catalyzes oxidation of malate to oxaloacetate in the citric acid cycle. Donates electrons to quinones of the electron transfer chain (By similarity).</text>
</comment>
<comment type="catalytic activity">
    <reaction>
        <text>(S)-malate + a quinone = a quinol + oxaloacetate</text>
        <dbReference type="Rhea" id="RHEA:46012"/>
        <dbReference type="ChEBI" id="CHEBI:15589"/>
        <dbReference type="ChEBI" id="CHEBI:16452"/>
        <dbReference type="ChEBI" id="CHEBI:24646"/>
        <dbReference type="ChEBI" id="CHEBI:132124"/>
        <dbReference type="EC" id="1.1.5.4"/>
    </reaction>
</comment>
<comment type="cofactor">
    <cofactor evidence="1">
        <name>FAD</name>
        <dbReference type="ChEBI" id="CHEBI:57692"/>
    </cofactor>
    <text evidence="1">The FAD is tightly bound.</text>
</comment>
<comment type="pathway">
    <text>Carbohydrate metabolism; tricarboxylic acid cycle; oxaloacetate from (S)-malate (quinone route): step 1/1.</text>
</comment>
<comment type="similarity">
    <text evidence="2">Belongs to the MQO family.</text>
</comment>
<reference key="1">
    <citation type="journal article" date="2000" name="Nature">
        <title>The genome sequence of the food-borne pathogen Campylobacter jejuni reveals hypervariable sequences.</title>
        <authorList>
            <person name="Parkhill J."/>
            <person name="Wren B.W."/>
            <person name="Mungall K.L."/>
            <person name="Ketley J.M."/>
            <person name="Churcher C.M."/>
            <person name="Basham D."/>
            <person name="Chillingworth T."/>
            <person name="Davies R.M."/>
            <person name="Feltwell T."/>
            <person name="Holroyd S."/>
            <person name="Jagels K."/>
            <person name="Karlyshev A.V."/>
            <person name="Moule S."/>
            <person name="Pallen M.J."/>
            <person name="Penn C.W."/>
            <person name="Quail M.A."/>
            <person name="Rajandream M.A."/>
            <person name="Rutherford K.M."/>
            <person name="van Vliet A.H.M."/>
            <person name="Whitehead S."/>
            <person name="Barrell B.G."/>
        </authorList>
    </citation>
    <scope>NUCLEOTIDE SEQUENCE [LARGE SCALE GENOMIC DNA]</scope>
    <source>
        <strain>ATCC 700819 / NCTC 11168</strain>
    </source>
</reference>
<sequence length="448" mass="50586">MSQQEFDVLVIGAGISGAALFYELARYTNIKNIALIEKYNTAATLNSKGTSNSQTIHCGDIETNYTLEKARKVKRTADMIVKYGLMQNAQNNFMFSHQKMALAVGDIECDYMKKRYEEFKELYPYIKFFDKAKIKQIEPKVVLGEDCNQDRPENICAMGVESGEVFTTVDFGKMSINLIEQAQKQNKNTFVAFNQEIIHIEKKDDIFILKTSNHQEYHAKSVVVNAGAHSLYLAHKMNLGMDKSCWPVAGSFYLTKQKLLNGKVYMVQNPKLPFAALHGDPDLLADMNTRFGPTALVIPKLERYHGLKSVPEFFEALKLDKTVLKVTFNMFKDATIRNYIFYNYLFELPFVDKSLFVKDAKKIVPSLKASDIYYAKGFGGVRPQVIDKTKGELMLGEASITETPGIIFNMTPSPGATSCLGNAERDAKLVCNYLGMEFNEDKFSSELL</sequence>
<name>MQO_CAMJE</name>
<gene>
    <name type="primary">mqo</name>
    <name type="ordered locus">Cj0393c</name>
</gene>
<organism>
    <name type="scientific">Campylobacter jejuni subsp. jejuni serotype O:2 (strain ATCC 700819 / NCTC 11168)</name>
    <dbReference type="NCBI Taxonomy" id="192222"/>
    <lineage>
        <taxon>Bacteria</taxon>
        <taxon>Pseudomonadati</taxon>
        <taxon>Campylobacterota</taxon>
        <taxon>Epsilonproteobacteria</taxon>
        <taxon>Campylobacterales</taxon>
        <taxon>Campylobacteraceae</taxon>
        <taxon>Campylobacter</taxon>
    </lineage>
</organism>
<dbReference type="EC" id="1.1.5.4"/>
<dbReference type="EMBL" id="AL111168">
    <property type="protein sequence ID" value="CAL34543.1"/>
    <property type="molecule type" value="Genomic_DNA"/>
</dbReference>
<dbReference type="PIR" id="G81382">
    <property type="entry name" value="G81382"/>
</dbReference>
<dbReference type="RefSeq" id="WP_002854402.1">
    <property type="nucleotide sequence ID" value="NZ_SZUC01000004.1"/>
</dbReference>
<dbReference type="RefSeq" id="YP_002343830.1">
    <property type="nucleotide sequence ID" value="NC_002163.1"/>
</dbReference>
<dbReference type="SMR" id="P56954"/>
<dbReference type="STRING" id="192222.Cj0393c"/>
<dbReference type="PaxDb" id="192222-Cj0393c"/>
<dbReference type="DNASU" id="904716"/>
<dbReference type="EnsemblBacteria" id="CAL34543">
    <property type="protein sequence ID" value="CAL34543"/>
    <property type="gene ID" value="Cj0393c"/>
</dbReference>
<dbReference type="GeneID" id="904716"/>
<dbReference type="KEGG" id="cje:Cj0393c"/>
<dbReference type="PATRIC" id="fig|192222.6.peg.384"/>
<dbReference type="eggNOG" id="COG0579">
    <property type="taxonomic scope" value="Bacteria"/>
</dbReference>
<dbReference type="HOGENOM" id="CLU_613842_0_0_7"/>
<dbReference type="OrthoDB" id="5337444at2"/>
<dbReference type="UniPathway" id="UPA00223">
    <property type="reaction ID" value="UER01008"/>
</dbReference>
<dbReference type="Proteomes" id="UP000000799">
    <property type="component" value="Chromosome"/>
</dbReference>
<dbReference type="GO" id="GO:0005737">
    <property type="term" value="C:cytoplasm"/>
    <property type="evidence" value="ECO:0007669"/>
    <property type="project" value="TreeGrafter"/>
</dbReference>
<dbReference type="GO" id="GO:0047545">
    <property type="term" value="F:2-hydroxyglutarate dehydrogenase activity"/>
    <property type="evidence" value="ECO:0007669"/>
    <property type="project" value="TreeGrafter"/>
</dbReference>
<dbReference type="GO" id="GO:0008924">
    <property type="term" value="F:L-malate dehydrogenase (quinone) activity"/>
    <property type="evidence" value="ECO:0007669"/>
    <property type="project" value="UniProtKB-UniRule"/>
</dbReference>
<dbReference type="GO" id="GO:0006099">
    <property type="term" value="P:tricarboxylic acid cycle"/>
    <property type="evidence" value="ECO:0007669"/>
    <property type="project" value="UniProtKB-UniRule"/>
</dbReference>
<dbReference type="Gene3D" id="3.30.9.10">
    <property type="entry name" value="D-Amino Acid Oxidase, subunit A, domain 2"/>
    <property type="match status" value="1"/>
</dbReference>
<dbReference type="Gene3D" id="3.50.50.60">
    <property type="entry name" value="FAD/NAD(P)-binding domain"/>
    <property type="match status" value="1"/>
</dbReference>
<dbReference type="HAMAP" id="MF_00212">
    <property type="entry name" value="MQO"/>
    <property type="match status" value="1"/>
</dbReference>
<dbReference type="InterPro" id="IPR036188">
    <property type="entry name" value="FAD/NAD-bd_sf"/>
</dbReference>
<dbReference type="InterPro" id="IPR006231">
    <property type="entry name" value="MQO"/>
</dbReference>
<dbReference type="PANTHER" id="PTHR43104">
    <property type="entry name" value="L-2-HYDROXYGLUTARATE DEHYDROGENASE, MITOCHONDRIAL"/>
    <property type="match status" value="1"/>
</dbReference>
<dbReference type="PANTHER" id="PTHR43104:SF2">
    <property type="entry name" value="L-2-HYDROXYGLUTARATE DEHYDROGENASE, MITOCHONDRIAL"/>
    <property type="match status" value="1"/>
</dbReference>
<dbReference type="Pfam" id="PF06039">
    <property type="entry name" value="Mqo"/>
    <property type="match status" value="1"/>
</dbReference>
<dbReference type="SUPFAM" id="SSF51905">
    <property type="entry name" value="FAD/NAD(P)-binding domain"/>
    <property type="match status" value="1"/>
</dbReference>